<protein>
    <recommendedName>
        <fullName evidence="1">Cell division protein ZipA</fullName>
    </recommendedName>
</protein>
<accession>A7FGC1</accession>
<sequence length="327" mass="35967">MQDLRLILIVVGAIAIIALLLHGLWTSRKERSSLFRDRPVKRTKQERVETPIESLDEGVGEVRVRTSHPQEKPSFNHLDDDDDEVPVIQHAETKSAQVKTASRQAPFASVQTDYDDPLLGGLSAEQPPHDLSRDPLLGKADESYSQPQHAEPPHVEKPAHQVAPQQHVESQQEPVAPAPEAKPQKLKETVLVLHVAAHHGGVIGGEVLLQSVLQSGFQFGEMGIFHRHLSPAGSGPVLFSLANMVKPGSFDPDTMSDFSTPGVSMFMMVPSYGDANQNFKLMLQSAQRIADDVGGVVLDDERRMMTPQKLESYKARIREVLDANTIA</sequence>
<name>ZIPA_YERP3</name>
<organism>
    <name type="scientific">Yersinia pseudotuberculosis serotype O:1b (strain IP 31758)</name>
    <dbReference type="NCBI Taxonomy" id="349747"/>
    <lineage>
        <taxon>Bacteria</taxon>
        <taxon>Pseudomonadati</taxon>
        <taxon>Pseudomonadota</taxon>
        <taxon>Gammaproteobacteria</taxon>
        <taxon>Enterobacterales</taxon>
        <taxon>Yersiniaceae</taxon>
        <taxon>Yersinia</taxon>
    </lineage>
</organism>
<comment type="function">
    <text evidence="1">Essential cell division protein that stabilizes the FtsZ protofilaments by cross-linking them and that serves as a cytoplasmic membrane anchor for the Z ring. Also required for the recruitment to the septal ring of downstream cell division proteins.</text>
</comment>
<comment type="subunit">
    <text evidence="1">Interacts with FtsZ via their C-terminal domains.</text>
</comment>
<comment type="subcellular location">
    <subcellularLocation>
        <location evidence="1">Cell inner membrane</location>
        <topology evidence="1">Single-pass type I membrane protein</topology>
    </subcellularLocation>
    <text evidence="1">Localizes to the Z ring in an FtsZ-dependent manner.</text>
</comment>
<comment type="similarity">
    <text evidence="1">Belongs to the ZipA family.</text>
</comment>
<keyword id="KW-0131">Cell cycle</keyword>
<keyword id="KW-0132">Cell division</keyword>
<keyword id="KW-0997">Cell inner membrane</keyword>
<keyword id="KW-1003">Cell membrane</keyword>
<keyword id="KW-0472">Membrane</keyword>
<keyword id="KW-0812">Transmembrane</keyword>
<keyword id="KW-1133">Transmembrane helix</keyword>
<feature type="chain" id="PRO_1000060871" description="Cell division protein ZipA">
    <location>
        <begin position="1"/>
        <end position="327"/>
    </location>
</feature>
<feature type="topological domain" description="Periplasmic" evidence="1">
    <location>
        <begin position="1"/>
        <end position="5"/>
    </location>
</feature>
<feature type="transmembrane region" description="Helical" evidence="1">
    <location>
        <begin position="6"/>
        <end position="26"/>
    </location>
</feature>
<feature type="topological domain" description="Cytoplasmic" evidence="1">
    <location>
        <begin position="27"/>
        <end position="327"/>
    </location>
</feature>
<feature type="region of interest" description="Disordered" evidence="2">
    <location>
        <begin position="60"/>
        <end position="182"/>
    </location>
</feature>
<feature type="compositionally biased region" description="Basic and acidic residues" evidence="2">
    <location>
        <begin position="60"/>
        <end position="71"/>
    </location>
</feature>
<feature type="compositionally biased region" description="Polar residues" evidence="2">
    <location>
        <begin position="94"/>
        <end position="103"/>
    </location>
</feature>
<feature type="compositionally biased region" description="Polar residues" evidence="2">
    <location>
        <begin position="163"/>
        <end position="173"/>
    </location>
</feature>
<reference key="1">
    <citation type="journal article" date="2007" name="PLoS Genet.">
        <title>The complete genome sequence of Yersinia pseudotuberculosis IP31758, the causative agent of Far East scarlet-like fever.</title>
        <authorList>
            <person name="Eppinger M."/>
            <person name="Rosovitz M.J."/>
            <person name="Fricke W.F."/>
            <person name="Rasko D.A."/>
            <person name="Kokorina G."/>
            <person name="Fayolle C."/>
            <person name="Lindler L.E."/>
            <person name="Carniel E."/>
            <person name="Ravel J."/>
        </authorList>
    </citation>
    <scope>NUCLEOTIDE SEQUENCE [LARGE SCALE GENOMIC DNA]</scope>
    <source>
        <strain>IP 31758</strain>
    </source>
</reference>
<proteinExistence type="inferred from homology"/>
<dbReference type="EMBL" id="CP000720">
    <property type="protein sequence ID" value="ABS49856.1"/>
    <property type="molecule type" value="Genomic_DNA"/>
</dbReference>
<dbReference type="SMR" id="A7FGC1"/>
<dbReference type="KEGG" id="ypi:YpsIP31758_1320"/>
<dbReference type="HOGENOM" id="CLU_030174_1_0_6"/>
<dbReference type="Proteomes" id="UP000002412">
    <property type="component" value="Chromosome"/>
</dbReference>
<dbReference type="GO" id="GO:0032153">
    <property type="term" value="C:cell division site"/>
    <property type="evidence" value="ECO:0007669"/>
    <property type="project" value="UniProtKB-UniRule"/>
</dbReference>
<dbReference type="GO" id="GO:0005886">
    <property type="term" value="C:plasma membrane"/>
    <property type="evidence" value="ECO:0007669"/>
    <property type="project" value="UniProtKB-SubCell"/>
</dbReference>
<dbReference type="GO" id="GO:0000917">
    <property type="term" value="P:division septum assembly"/>
    <property type="evidence" value="ECO:0007669"/>
    <property type="project" value="TreeGrafter"/>
</dbReference>
<dbReference type="GO" id="GO:0043093">
    <property type="term" value="P:FtsZ-dependent cytokinesis"/>
    <property type="evidence" value="ECO:0007669"/>
    <property type="project" value="UniProtKB-UniRule"/>
</dbReference>
<dbReference type="CDD" id="cd00231">
    <property type="entry name" value="ZipA"/>
    <property type="match status" value="1"/>
</dbReference>
<dbReference type="FunFam" id="3.30.1400.10:FF:000001">
    <property type="entry name" value="Cell division protein ZipA"/>
    <property type="match status" value="1"/>
</dbReference>
<dbReference type="Gene3D" id="3.30.1400.10">
    <property type="entry name" value="ZipA, C-terminal FtsZ-binding domain"/>
    <property type="match status" value="1"/>
</dbReference>
<dbReference type="HAMAP" id="MF_00509">
    <property type="entry name" value="ZipA"/>
    <property type="match status" value="1"/>
</dbReference>
<dbReference type="InterPro" id="IPR011919">
    <property type="entry name" value="Cell_div_ZipA"/>
</dbReference>
<dbReference type="InterPro" id="IPR007449">
    <property type="entry name" value="ZipA_FtsZ-bd_C"/>
</dbReference>
<dbReference type="InterPro" id="IPR036765">
    <property type="entry name" value="ZipA_FtsZ-bd_C_sf"/>
</dbReference>
<dbReference type="NCBIfam" id="TIGR02205">
    <property type="entry name" value="septum_zipA"/>
    <property type="match status" value="1"/>
</dbReference>
<dbReference type="PANTHER" id="PTHR38685">
    <property type="entry name" value="CELL DIVISION PROTEIN ZIPA"/>
    <property type="match status" value="1"/>
</dbReference>
<dbReference type="PANTHER" id="PTHR38685:SF1">
    <property type="entry name" value="CELL DIVISION PROTEIN ZIPA"/>
    <property type="match status" value="1"/>
</dbReference>
<dbReference type="Pfam" id="PF04354">
    <property type="entry name" value="ZipA_C"/>
    <property type="match status" value="1"/>
</dbReference>
<dbReference type="SMART" id="SM00771">
    <property type="entry name" value="ZipA_C"/>
    <property type="match status" value="1"/>
</dbReference>
<dbReference type="SUPFAM" id="SSF64383">
    <property type="entry name" value="Cell-division protein ZipA, C-terminal domain"/>
    <property type="match status" value="1"/>
</dbReference>
<evidence type="ECO:0000255" key="1">
    <source>
        <dbReference type="HAMAP-Rule" id="MF_00509"/>
    </source>
</evidence>
<evidence type="ECO:0000256" key="2">
    <source>
        <dbReference type="SAM" id="MobiDB-lite"/>
    </source>
</evidence>
<gene>
    <name evidence="1" type="primary">zipA</name>
    <name type="ordered locus">YpsIP31758_1320</name>
</gene>